<reference key="1">
    <citation type="submission" date="2003-11" db="EMBL/GenBank/DDBJ databases">
        <authorList>
            <consortium name="NIH - Xenopus Gene Collection (XGC) project"/>
        </authorList>
    </citation>
    <scope>NUCLEOTIDE SEQUENCE [LARGE SCALE MRNA]</scope>
    <source>
        <tissue>Embryo</tissue>
    </source>
</reference>
<evidence type="ECO:0000250" key="1">
    <source>
        <dbReference type="UniProtKB" id="Q5T6F0"/>
    </source>
</evidence>
<evidence type="ECO:0000256" key="2">
    <source>
        <dbReference type="SAM" id="MobiDB-lite"/>
    </source>
</evidence>
<evidence type="ECO:0000305" key="3"/>
<protein>
    <recommendedName>
        <fullName evidence="3">DDB1- and CUL4-associated factor 12</fullName>
    </recommendedName>
    <alternativeName>
        <fullName>WD repeat-containing protein 40A</fullName>
    </alternativeName>
</protein>
<keyword id="KW-0963">Cytoplasm</keyword>
<keyword id="KW-0206">Cytoskeleton</keyword>
<keyword id="KW-0539">Nucleus</keyword>
<keyword id="KW-1185">Reference proteome</keyword>
<keyword id="KW-0677">Repeat</keyword>
<keyword id="KW-0833">Ubl conjugation pathway</keyword>
<keyword id="KW-0853">WD repeat</keyword>
<dbReference type="EMBL" id="BC061422">
    <property type="protein sequence ID" value="AAH61422.1"/>
    <property type="molecule type" value="mRNA"/>
</dbReference>
<dbReference type="RefSeq" id="NP_988998.1">
    <property type="nucleotide sequence ID" value="NM_203667.1"/>
</dbReference>
<dbReference type="SMR" id="Q6P809"/>
<dbReference type="FunCoup" id="Q6P809">
    <property type="interactions" value="552"/>
</dbReference>
<dbReference type="DNASU" id="394594"/>
<dbReference type="GeneID" id="394594"/>
<dbReference type="KEGG" id="xtr:394594"/>
<dbReference type="AGR" id="Xenbase:XB-GENE-1008710"/>
<dbReference type="CTD" id="25853"/>
<dbReference type="Xenbase" id="XB-GENE-1008710">
    <property type="gene designation" value="dcaf12"/>
</dbReference>
<dbReference type="InParanoid" id="Q6P809"/>
<dbReference type="OrthoDB" id="9610195at2759"/>
<dbReference type="UniPathway" id="UPA00143"/>
<dbReference type="Proteomes" id="UP000008143">
    <property type="component" value="Chromosome 1"/>
</dbReference>
<dbReference type="GO" id="GO:0005813">
    <property type="term" value="C:centrosome"/>
    <property type="evidence" value="ECO:0007669"/>
    <property type="project" value="UniProtKB-SubCell"/>
</dbReference>
<dbReference type="GO" id="GO:0080008">
    <property type="term" value="C:Cul4-RING E3 ubiquitin ligase complex"/>
    <property type="evidence" value="ECO:0000250"/>
    <property type="project" value="UniProtKB"/>
</dbReference>
<dbReference type="GO" id="GO:0005737">
    <property type="term" value="C:cytoplasm"/>
    <property type="evidence" value="ECO:0007669"/>
    <property type="project" value="UniProtKB-SubCell"/>
</dbReference>
<dbReference type="GO" id="GO:0005634">
    <property type="term" value="C:nucleus"/>
    <property type="evidence" value="ECO:0007669"/>
    <property type="project" value="UniProtKB-SubCell"/>
</dbReference>
<dbReference type="GO" id="GO:1990756">
    <property type="term" value="F:ubiquitin-like ligase-substrate adaptor activity"/>
    <property type="evidence" value="ECO:0000250"/>
    <property type="project" value="UniProtKB"/>
</dbReference>
<dbReference type="GO" id="GO:0016567">
    <property type="term" value="P:protein ubiquitination"/>
    <property type="evidence" value="ECO:0007669"/>
    <property type="project" value="UniProtKB-UniPathway"/>
</dbReference>
<dbReference type="GO" id="GO:0010506">
    <property type="term" value="P:regulation of autophagy"/>
    <property type="evidence" value="ECO:0000250"/>
    <property type="project" value="UniProtKB"/>
</dbReference>
<dbReference type="GO" id="GO:0140627">
    <property type="term" value="P:ubiquitin-dependent protein catabolic process via the C-end degron rule pathway"/>
    <property type="evidence" value="ECO:0000250"/>
    <property type="project" value="UniProtKB"/>
</dbReference>
<dbReference type="FunFam" id="2.130.10.10:FF:001190">
    <property type="entry name" value="DDB1 and CUL4 associated factor 12"/>
    <property type="match status" value="1"/>
</dbReference>
<dbReference type="FunFam" id="2.130.10.10:FF:000253">
    <property type="entry name" value="DDB1- and CUL4-associated factor 12"/>
    <property type="match status" value="1"/>
</dbReference>
<dbReference type="Gene3D" id="2.130.10.10">
    <property type="entry name" value="YVTN repeat-like/Quinoprotein amine dehydrogenase"/>
    <property type="match status" value="1"/>
</dbReference>
<dbReference type="InterPro" id="IPR056151">
    <property type="entry name" value="Beta-prop_DCAF12"/>
</dbReference>
<dbReference type="InterPro" id="IPR051191">
    <property type="entry name" value="DCAF12"/>
</dbReference>
<dbReference type="InterPro" id="IPR015943">
    <property type="entry name" value="WD40/YVTN_repeat-like_dom_sf"/>
</dbReference>
<dbReference type="InterPro" id="IPR019775">
    <property type="entry name" value="WD40_repeat_CS"/>
</dbReference>
<dbReference type="InterPro" id="IPR036322">
    <property type="entry name" value="WD40_repeat_dom_sf"/>
</dbReference>
<dbReference type="InterPro" id="IPR001680">
    <property type="entry name" value="WD40_rpt"/>
</dbReference>
<dbReference type="PANTHER" id="PTHR19860:SF16">
    <property type="entry name" value="DDB1- AND CUL4-ASSOCIATED FACTOR 12"/>
    <property type="match status" value="1"/>
</dbReference>
<dbReference type="PANTHER" id="PTHR19860">
    <property type="entry name" value="DDB1- AND CUL4-ASSOCIATED FACTOR 12-RELATED"/>
    <property type="match status" value="1"/>
</dbReference>
<dbReference type="Pfam" id="PF23760">
    <property type="entry name" value="Beta-prop_DCAF12"/>
    <property type="match status" value="1"/>
</dbReference>
<dbReference type="SMART" id="SM00320">
    <property type="entry name" value="WD40"/>
    <property type="match status" value="3"/>
</dbReference>
<dbReference type="SUPFAM" id="SSF50978">
    <property type="entry name" value="WD40 repeat-like"/>
    <property type="match status" value="1"/>
</dbReference>
<dbReference type="PROSITE" id="PS00678">
    <property type="entry name" value="WD_REPEATS_1"/>
    <property type="match status" value="1"/>
</dbReference>
<dbReference type="PROSITE" id="PS50082">
    <property type="entry name" value="WD_REPEATS_2"/>
    <property type="match status" value="1"/>
</dbReference>
<dbReference type="PROSITE" id="PS50294">
    <property type="entry name" value="WD_REPEATS_REGION"/>
    <property type="match status" value="1"/>
</dbReference>
<accession>Q6P809</accession>
<proteinExistence type="evidence at transcript level"/>
<comment type="function">
    <text evidence="1">Substrate-recognition component of a DCX (DDB1-CUL4-X-box) E3 ubiquitin-protein ligase complex of the DesCEND (destruction via C-end degrons) pathway, which recognizes a C-degron located at the extreme C terminus of target proteins, leading to their ubiquitination and degradation. The C-degron recognized by the DesCEND pathway is usually a motif of less than ten residues and can be present in full-length proteins, truncated proteins or proteolytically cleaved forms. The DCX(DCAF12) complex specifically recognizes proteins with a diglutamate (Glu-Glu) at the C-terminus leading to their ubiquitination and degradation. Also directly recognizes the C-terminal glutamate-leucine (Glu-Leu) degron as an alternative degron in proteins leading to their ubiquitination and degradation.</text>
</comment>
<comment type="pathway">
    <text evidence="1">Protein modification; protein ubiquitination.</text>
</comment>
<comment type="subunit">
    <text evidence="1">Component of the DCX(DCAF12) E3 ubiquitin ligase complex, at least composed of cul4 (cul4a or cul4b), ddb1, dcaf12 and rbx1.</text>
</comment>
<comment type="subcellular location">
    <subcellularLocation>
        <location evidence="1">Cytoplasm</location>
    </subcellularLocation>
    <subcellularLocation>
        <location evidence="1">Cytoplasm</location>
        <location evidence="1">Cytoskeleton</location>
        <location evidence="1">Microtubule organizing center</location>
        <location evidence="1">Centrosome</location>
    </subcellularLocation>
    <subcellularLocation>
        <location evidence="1">Nucleus</location>
    </subcellularLocation>
</comment>
<comment type="similarity">
    <text evidence="3">Belongs to the WD repeat DCAF12 family.</text>
</comment>
<sequence length="446" mass="49514">MTRRAVSRKRRAAPGTGPGEQSDWDHSAHKRKRLPPEKKSLVFYLKSRELKPHNDSSYLRLLRGHAACTLPGILSEREFHLGTLNKVFASQWLNHRQVVCGTKCNTLFVVDVQTGQITKIPILKDREPLSGSHQSCGIHAIEINPSRTLLATGGDNPNSIAVYRLPTLDPVCVGDGGHNDWIFSIAWISDTMAVSGSRDGSMALWEMTEEILSKSDFQHGLSRVPVYAHISHKALKDIPKESSNPVNCKVRALAFNSKNKELGAVSLDGFFHLWKAELTLAKLLSTKLPYCRENVCLAYGLEWSLYAVGSQAHVSFLDPRQPPQCAKSVYCREQGSGIRSVSFYEHIVTVGTGQGALLFYDIRAQRFLEDSTGSCRNSKYKGDLLKLSTGKGWLNHNEMWMNYFSDIDCCPNAVYTHCYDSSGTKLFVAGGPLPTGLHGNYAGLWS</sequence>
<name>DCA12_XENTR</name>
<feature type="chain" id="PRO_0000306847" description="DDB1- and CUL4-associated factor 12">
    <location>
        <begin position="1"/>
        <end position="446"/>
    </location>
</feature>
<feature type="repeat" description="WD 1">
    <location>
        <begin position="132"/>
        <end position="173"/>
    </location>
</feature>
<feature type="repeat" description="WD 2">
    <location>
        <begin position="177"/>
        <end position="215"/>
    </location>
</feature>
<feature type="repeat" description="WD 3">
    <location>
        <begin position="245"/>
        <end position="284"/>
    </location>
</feature>
<feature type="repeat" description="WD 4">
    <location>
        <begin position="333"/>
        <end position="370"/>
    </location>
</feature>
<feature type="region of interest" description="Disordered" evidence="2">
    <location>
        <begin position="1"/>
        <end position="33"/>
    </location>
</feature>
<feature type="compositionally biased region" description="Basic residues" evidence="2">
    <location>
        <begin position="1"/>
        <end position="12"/>
    </location>
</feature>
<gene>
    <name evidence="1" type="primary">dcaf12</name>
    <name type="synonym">wdr40a</name>
</gene>
<organism>
    <name type="scientific">Xenopus tropicalis</name>
    <name type="common">Western clawed frog</name>
    <name type="synonym">Silurana tropicalis</name>
    <dbReference type="NCBI Taxonomy" id="8364"/>
    <lineage>
        <taxon>Eukaryota</taxon>
        <taxon>Metazoa</taxon>
        <taxon>Chordata</taxon>
        <taxon>Craniata</taxon>
        <taxon>Vertebrata</taxon>
        <taxon>Euteleostomi</taxon>
        <taxon>Amphibia</taxon>
        <taxon>Batrachia</taxon>
        <taxon>Anura</taxon>
        <taxon>Pipoidea</taxon>
        <taxon>Pipidae</taxon>
        <taxon>Xenopodinae</taxon>
        <taxon>Xenopus</taxon>
        <taxon>Silurana</taxon>
    </lineage>
</organism>